<accession>Q6GMA4</accession>
<sequence>MGNLFARKRRSRVTEQDKAVLQLKQQRDKLKQYQKKITLQLQRERELAKQLLHDGKKEKAKLLLKKKRYQEQLLEKTDNQISNLEKMVEDIEFAQIEMKVIEGLKVGNECLKKMHEVMSIEEVERIMDETQEGIEYQRQIDEMLSGSLTAEDEEAILEELEAITQEDLELPEAPSEPLPDTIPEKQAVKNKPKPQMIAAS</sequence>
<evidence type="ECO:0000250" key="1"/>
<evidence type="ECO:0000255" key="2"/>
<evidence type="ECO:0000256" key="3">
    <source>
        <dbReference type="SAM" id="MobiDB-lite"/>
    </source>
</evidence>
<evidence type="ECO:0000305" key="4"/>
<comment type="function">
    <text evidence="1">Probable core component of the endosomal sorting required for transport complex III (ESCRT-III) which is involved in multivesicular bodies (MVBs) formation and sorting of endosomal cargo proteins into MVBs. MVBs contain intraluminal vesicles (ILVs) that are generated by invagination and scission from the limiting membrane of the endosome and mostly are delivered to lysosomes enabling degradation of membrane proteins, such as stimulated growth factor receptors, lysosomal enzymes and lipids. In the ESCRT-III complex, it probably serves as an acceptor for the ESCRT-II complex on endosomal membranes (By similarity).</text>
</comment>
<comment type="subunit">
    <text evidence="1">Probable core component of the endosomal sorting required for transport complex III (ESCRT-III). ESCRT-III components are thought to multimerize to form a flat lattice on the perimeter membrane of the endosome (By similarity).</text>
</comment>
<comment type="subcellular location">
    <subcellularLocation>
        <location evidence="1">Endomembrane system</location>
        <topology evidence="1">Lipid-anchor</topology>
    </subcellularLocation>
    <subcellularLocation>
        <location evidence="1">Late endosome membrane</location>
    </subcellularLocation>
</comment>
<comment type="similarity">
    <text evidence="4">Belongs to the SNF7 family.</text>
</comment>
<dbReference type="EMBL" id="BC074167">
    <property type="protein sequence ID" value="AAH74167.1"/>
    <property type="molecule type" value="mRNA"/>
</dbReference>
<dbReference type="RefSeq" id="NP_001086081.1">
    <property type="nucleotide sequence ID" value="NM_001092612.1"/>
</dbReference>
<dbReference type="SMR" id="Q6GMA4"/>
<dbReference type="DNASU" id="444510"/>
<dbReference type="GeneID" id="444510"/>
<dbReference type="KEGG" id="xla:444510"/>
<dbReference type="AGR" id="Xenbase:XB-GENE-6254897"/>
<dbReference type="CTD" id="444510"/>
<dbReference type="Xenbase" id="XB-GENE-6254897">
    <property type="gene designation" value="chmp6.S"/>
</dbReference>
<dbReference type="OrthoDB" id="441172at2759"/>
<dbReference type="Proteomes" id="UP000186698">
    <property type="component" value="Chromosome 9_10S"/>
</dbReference>
<dbReference type="Bgee" id="444510">
    <property type="expression patterns" value="Expressed in muscle tissue and 19 other cell types or tissues"/>
</dbReference>
<dbReference type="GO" id="GO:0000815">
    <property type="term" value="C:ESCRT III complex"/>
    <property type="evidence" value="ECO:0000318"/>
    <property type="project" value="GO_Central"/>
</dbReference>
<dbReference type="GO" id="GO:0031902">
    <property type="term" value="C:late endosome membrane"/>
    <property type="evidence" value="ECO:0007669"/>
    <property type="project" value="UniProtKB-SubCell"/>
</dbReference>
<dbReference type="GO" id="GO:0005771">
    <property type="term" value="C:multivesicular body"/>
    <property type="evidence" value="ECO:0000318"/>
    <property type="project" value="GO_Central"/>
</dbReference>
<dbReference type="GO" id="GO:0032511">
    <property type="term" value="P:late endosome to vacuole transport via multivesicular body sorting pathway"/>
    <property type="evidence" value="ECO:0000318"/>
    <property type="project" value="GO_Central"/>
</dbReference>
<dbReference type="GO" id="GO:0015031">
    <property type="term" value="P:protein transport"/>
    <property type="evidence" value="ECO:0007669"/>
    <property type="project" value="UniProtKB-KW"/>
</dbReference>
<dbReference type="GO" id="GO:0006900">
    <property type="term" value="P:vesicle budding from membrane"/>
    <property type="evidence" value="ECO:0000318"/>
    <property type="project" value="GO_Central"/>
</dbReference>
<dbReference type="Gene3D" id="6.10.140.1230">
    <property type="match status" value="1"/>
</dbReference>
<dbReference type="InterPro" id="IPR005024">
    <property type="entry name" value="Snf7_fam"/>
</dbReference>
<dbReference type="PANTHER" id="PTHR22761">
    <property type="entry name" value="CHARGED MULTIVESICULAR BODY PROTEIN"/>
    <property type="match status" value="1"/>
</dbReference>
<dbReference type="PANTHER" id="PTHR22761:SF5">
    <property type="entry name" value="CHARGED MULTIVESICULAR BODY PROTEIN 6"/>
    <property type="match status" value="1"/>
</dbReference>
<dbReference type="Pfam" id="PF03357">
    <property type="entry name" value="Snf7"/>
    <property type="match status" value="1"/>
</dbReference>
<gene>
    <name type="primary">chmp6-a</name>
</gene>
<name>CHM6A_XENLA</name>
<organism>
    <name type="scientific">Xenopus laevis</name>
    <name type="common">African clawed frog</name>
    <dbReference type="NCBI Taxonomy" id="8355"/>
    <lineage>
        <taxon>Eukaryota</taxon>
        <taxon>Metazoa</taxon>
        <taxon>Chordata</taxon>
        <taxon>Craniata</taxon>
        <taxon>Vertebrata</taxon>
        <taxon>Euteleostomi</taxon>
        <taxon>Amphibia</taxon>
        <taxon>Batrachia</taxon>
        <taxon>Anura</taxon>
        <taxon>Pipoidea</taxon>
        <taxon>Pipidae</taxon>
        <taxon>Xenopodinae</taxon>
        <taxon>Xenopus</taxon>
        <taxon>Xenopus</taxon>
    </lineage>
</organism>
<feature type="initiator methionine" description="Removed" evidence="2">
    <location>
        <position position="1"/>
    </location>
</feature>
<feature type="chain" id="PRO_0000211513" description="Charged multivesicular body protein 6-A">
    <location>
        <begin position="2"/>
        <end position="200"/>
    </location>
</feature>
<feature type="region of interest" description="Disordered" evidence="3">
    <location>
        <begin position="166"/>
        <end position="200"/>
    </location>
</feature>
<feature type="coiled-coil region" evidence="2">
    <location>
        <begin position="9"/>
        <end position="102"/>
    </location>
</feature>
<feature type="short sequence motif" description="Type-2 MIT-interacting motif" evidence="1">
    <location>
        <begin position="168"/>
        <end position="179"/>
    </location>
</feature>
<feature type="lipid moiety-binding region" description="N-myristoyl glycine" evidence="2">
    <location>
        <position position="2"/>
    </location>
</feature>
<proteinExistence type="evidence at transcript level"/>
<reference key="1">
    <citation type="submission" date="2004-06" db="EMBL/GenBank/DDBJ databases">
        <authorList>
            <consortium name="NIH - Xenopus Gene Collection (XGC) project"/>
        </authorList>
    </citation>
    <scope>NUCLEOTIDE SEQUENCE [LARGE SCALE MRNA]</scope>
    <source>
        <tissue>Kidney</tissue>
    </source>
</reference>
<keyword id="KW-0175">Coiled coil</keyword>
<keyword id="KW-0967">Endosome</keyword>
<keyword id="KW-0449">Lipoprotein</keyword>
<keyword id="KW-0472">Membrane</keyword>
<keyword id="KW-0519">Myristate</keyword>
<keyword id="KW-0653">Protein transport</keyword>
<keyword id="KW-1185">Reference proteome</keyword>
<keyword id="KW-0813">Transport</keyword>
<protein>
    <recommendedName>
        <fullName>Charged multivesicular body protein 6-A</fullName>
    </recommendedName>
    <alternativeName>
        <fullName>Chromatin-modifying protein 6-A</fullName>
    </alternativeName>
</protein>